<reference key="1">
    <citation type="journal article" date="2003" name="Nature">
        <title>Genome divergence in two Prochlorococcus ecotypes reflects oceanic niche differentiation.</title>
        <authorList>
            <person name="Rocap G."/>
            <person name="Larimer F.W."/>
            <person name="Lamerdin J.E."/>
            <person name="Malfatti S."/>
            <person name="Chain P."/>
            <person name="Ahlgren N.A."/>
            <person name="Arellano A."/>
            <person name="Coleman M."/>
            <person name="Hauser L."/>
            <person name="Hess W.R."/>
            <person name="Johnson Z.I."/>
            <person name="Land M.L."/>
            <person name="Lindell D."/>
            <person name="Post A.F."/>
            <person name="Regala W."/>
            <person name="Shah M."/>
            <person name="Shaw S.L."/>
            <person name="Steglich C."/>
            <person name="Sullivan M.B."/>
            <person name="Ting C.S."/>
            <person name="Tolonen A."/>
            <person name="Webb E.A."/>
            <person name="Zinser E.R."/>
            <person name="Chisholm S.W."/>
        </authorList>
    </citation>
    <scope>NUCLEOTIDE SEQUENCE [LARGE SCALE GENOMIC DNA]</scope>
    <source>
        <strain>CCMP1986 / NIES-2087 / MED4</strain>
    </source>
</reference>
<organism>
    <name type="scientific">Prochlorococcus marinus subsp. pastoris (strain CCMP1986 / NIES-2087 / MED4)</name>
    <dbReference type="NCBI Taxonomy" id="59919"/>
    <lineage>
        <taxon>Bacteria</taxon>
        <taxon>Bacillati</taxon>
        <taxon>Cyanobacteriota</taxon>
        <taxon>Cyanophyceae</taxon>
        <taxon>Synechococcales</taxon>
        <taxon>Prochlorococcaceae</taxon>
        <taxon>Prochlorococcus</taxon>
    </lineage>
</organism>
<accession>Q7V2I5</accession>
<keyword id="KW-0456">Lyase</keyword>
<sequence>MKPYLLEHEELKELSAKIGGWRIMTNHIEREFNFSNFVEAFSFMTKIALICEKHNHHPNWENVYSKVIIKLSTHDLGGITNLDQTIASEINDIFEK</sequence>
<protein>
    <recommendedName>
        <fullName evidence="1">Putative pterin-4-alpha-carbinolamine dehydratase</fullName>
        <shortName evidence="1">PHS</shortName>
        <ecNumber evidence="1">4.2.1.96</ecNumber>
    </recommendedName>
    <alternativeName>
        <fullName evidence="1">4-alpha-hydroxy-tetrahydropterin dehydratase</fullName>
    </alternativeName>
    <alternativeName>
        <fullName evidence="1">Pterin carbinolamine dehydratase</fullName>
        <shortName evidence="1">PCD</shortName>
    </alternativeName>
</protein>
<name>PHS_PROMP</name>
<evidence type="ECO:0000255" key="1">
    <source>
        <dbReference type="HAMAP-Rule" id="MF_00434"/>
    </source>
</evidence>
<comment type="catalytic activity">
    <reaction evidence="1">
        <text>(4aS,6R)-4a-hydroxy-L-erythro-5,6,7,8-tetrahydrobiopterin = (6R)-L-erythro-6,7-dihydrobiopterin + H2O</text>
        <dbReference type="Rhea" id="RHEA:11920"/>
        <dbReference type="ChEBI" id="CHEBI:15377"/>
        <dbReference type="ChEBI" id="CHEBI:15642"/>
        <dbReference type="ChEBI" id="CHEBI:43120"/>
        <dbReference type="EC" id="4.2.1.96"/>
    </reaction>
</comment>
<comment type="similarity">
    <text evidence="1">Belongs to the pterin-4-alpha-carbinolamine dehydratase family.</text>
</comment>
<feature type="chain" id="PRO_0000063090" description="Putative pterin-4-alpha-carbinolamine dehydratase">
    <location>
        <begin position="1"/>
        <end position="96"/>
    </location>
</feature>
<dbReference type="EC" id="4.2.1.96" evidence="1"/>
<dbReference type="EMBL" id="BX548174">
    <property type="protein sequence ID" value="CAE18950.1"/>
    <property type="molecule type" value="Genomic_DNA"/>
</dbReference>
<dbReference type="RefSeq" id="WP_011132126.1">
    <property type="nucleotide sequence ID" value="NC_005072.1"/>
</dbReference>
<dbReference type="SMR" id="Q7V2I5"/>
<dbReference type="STRING" id="59919.PMM0491"/>
<dbReference type="KEGG" id="pmm:PMM0491"/>
<dbReference type="eggNOG" id="COG2154">
    <property type="taxonomic scope" value="Bacteria"/>
</dbReference>
<dbReference type="HOGENOM" id="CLU_081974_3_2_3"/>
<dbReference type="OrthoDB" id="9794987at2"/>
<dbReference type="Proteomes" id="UP000001026">
    <property type="component" value="Chromosome"/>
</dbReference>
<dbReference type="GO" id="GO:0008124">
    <property type="term" value="F:4-alpha-hydroxytetrahydrobiopterin dehydratase activity"/>
    <property type="evidence" value="ECO:0007669"/>
    <property type="project" value="UniProtKB-UniRule"/>
</dbReference>
<dbReference type="GO" id="GO:0006729">
    <property type="term" value="P:tetrahydrobiopterin biosynthetic process"/>
    <property type="evidence" value="ECO:0007669"/>
    <property type="project" value="InterPro"/>
</dbReference>
<dbReference type="Gene3D" id="3.30.1360.20">
    <property type="entry name" value="Transcriptional coactivator/pterin dehydratase"/>
    <property type="match status" value="1"/>
</dbReference>
<dbReference type="HAMAP" id="MF_00434">
    <property type="entry name" value="Pterin_4_alpha"/>
    <property type="match status" value="1"/>
</dbReference>
<dbReference type="InterPro" id="IPR036428">
    <property type="entry name" value="PCD_sf"/>
</dbReference>
<dbReference type="InterPro" id="IPR001533">
    <property type="entry name" value="Pterin_deHydtase"/>
</dbReference>
<dbReference type="NCBIfam" id="NF002018">
    <property type="entry name" value="PRK00823.1-3"/>
    <property type="match status" value="1"/>
</dbReference>
<dbReference type="PANTHER" id="PTHR12599">
    <property type="entry name" value="PTERIN-4-ALPHA-CARBINOLAMINE DEHYDRATASE"/>
    <property type="match status" value="1"/>
</dbReference>
<dbReference type="PANTHER" id="PTHR12599:SF0">
    <property type="entry name" value="PTERIN-4-ALPHA-CARBINOLAMINE DEHYDRATASE"/>
    <property type="match status" value="1"/>
</dbReference>
<dbReference type="Pfam" id="PF01329">
    <property type="entry name" value="Pterin_4a"/>
    <property type="match status" value="1"/>
</dbReference>
<dbReference type="SUPFAM" id="SSF55248">
    <property type="entry name" value="PCD-like"/>
    <property type="match status" value="1"/>
</dbReference>
<gene>
    <name type="ordered locus">PMM0491</name>
</gene>
<proteinExistence type="inferred from homology"/>